<sequence length="261" mass="29886">MTHQTHAYHMVNPSPWPLTGALSALLMTSGLIMWFHFNSTTLLMLGLTTNMLTMYQWWRDVIRESTFQGHHTPNVQKGLRYGMILFIISEVLFFTGFFWAFYHSSLAPTPELGGCWPPTGIHPLNPLEVPLLNTSVLLASGVSITWAHHSLMEGNRNHMLQALFITIALGVYFTLLQASEYYEAPFTISDGVYGSTFFVATGFHGLHVIIGSTFLIVCFFRQLKFHFTSSHHFGFEAAAWYWHFVDVVWLFLYVSIYWWGS</sequence>
<feature type="chain" id="PRO_0000183779" description="Cytochrome c oxidase subunit 3">
    <location>
        <begin position="1"/>
        <end position="261"/>
    </location>
</feature>
<feature type="topological domain" description="Mitochondrial matrix" evidence="1">
    <location>
        <begin position="1"/>
        <end position="15"/>
    </location>
</feature>
<feature type="transmembrane region" description="Helical; Name=I" evidence="1">
    <location>
        <begin position="16"/>
        <end position="34"/>
    </location>
</feature>
<feature type="topological domain" description="Mitochondrial intermembrane" evidence="1">
    <location>
        <begin position="35"/>
        <end position="40"/>
    </location>
</feature>
<feature type="transmembrane region" description="Helical; Name=II" evidence="1">
    <location>
        <begin position="41"/>
        <end position="66"/>
    </location>
</feature>
<feature type="topological domain" description="Mitochondrial matrix" evidence="1">
    <location>
        <begin position="67"/>
        <end position="72"/>
    </location>
</feature>
<feature type="transmembrane region" description="Helical; Name=III" evidence="1">
    <location>
        <begin position="73"/>
        <end position="105"/>
    </location>
</feature>
<feature type="topological domain" description="Mitochondrial intermembrane" evidence="1">
    <location>
        <begin position="106"/>
        <end position="128"/>
    </location>
</feature>
<feature type="transmembrane region" description="Helical; Name=IV" evidence="1">
    <location>
        <begin position="129"/>
        <end position="152"/>
    </location>
</feature>
<feature type="topological domain" description="Mitochondrial matrix" evidence="1">
    <location>
        <begin position="153"/>
        <end position="155"/>
    </location>
</feature>
<feature type="transmembrane region" description="Helical; Name=V" evidence="1">
    <location>
        <begin position="156"/>
        <end position="183"/>
    </location>
</feature>
<feature type="topological domain" description="Mitochondrial intermembrane" evidence="1">
    <location>
        <begin position="184"/>
        <end position="190"/>
    </location>
</feature>
<feature type="transmembrane region" description="Helical; Name=VI" evidence="1">
    <location>
        <begin position="191"/>
        <end position="223"/>
    </location>
</feature>
<feature type="topological domain" description="Mitochondrial matrix" evidence="1">
    <location>
        <begin position="224"/>
        <end position="232"/>
    </location>
</feature>
<feature type="transmembrane region" description="Helical; Name=VII" evidence="1">
    <location>
        <begin position="233"/>
        <end position="256"/>
    </location>
</feature>
<feature type="topological domain" description="Mitochondrial intermembrane" evidence="1">
    <location>
        <begin position="257"/>
        <end position="261"/>
    </location>
</feature>
<feature type="sequence variant" description="In subsp. Gazella.">
    <original>A</original>
    <variation>T</variation>
    <location>
        <position position="168"/>
    </location>
</feature>
<feature type="sequence variant" description="In subsp. Gazella.">
    <original>V</original>
    <variation>I</variation>
    <location>
        <position position="192"/>
    </location>
</feature>
<proteinExistence type="inferred from homology"/>
<comment type="function">
    <text evidence="2">Component of the cytochrome c oxidase, the last enzyme in the mitochondrial electron transport chain which drives oxidative phosphorylation. The respiratory chain contains 3 multisubunit complexes succinate dehydrogenase (complex II, CII), ubiquinol-cytochrome c oxidoreductase (cytochrome b-c1 complex, complex III, CIII) and cytochrome c oxidase (complex IV, CIV), that cooperate to transfer electrons derived from NADH and succinate to molecular oxygen, creating an electrochemical gradient over the inner membrane that drives transmembrane transport and the ATP synthase. Cytochrome c oxidase is the component of the respiratory chain that catalyzes the reduction of oxygen to water. Electrons originating from reduced cytochrome c in the intermembrane space (IMS) are transferred via the dinuclear copper A center (CU(A)) of subunit 2 and heme A of subunit 1 to the active site in subunit 1, a binuclear center (BNC) formed by heme A3 and copper B (CU(B)). The BNC reduces molecular oxygen to 2 water molecules using 4 electrons from cytochrome c in the IMS and 4 protons from the mitochondrial matrix.</text>
</comment>
<comment type="catalytic activity">
    <reaction evidence="2">
        <text>4 Fe(II)-[cytochrome c] + O2 + 8 H(+)(in) = 4 Fe(III)-[cytochrome c] + 2 H2O + 4 H(+)(out)</text>
        <dbReference type="Rhea" id="RHEA:11436"/>
        <dbReference type="Rhea" id="RHEA-COMP:10350"/>
        <dbReference type="Rhea" id="RHEA-COMP:14399"/>
        <dbReference type="ChEBI" id="CHEBI:15377"/>
        <dbReference type="ChEBI" id="CHEBI:15378"/>
        <dbReference type="ChEBI" id="CHEBI:15379"/>
        <dbReference type="ChEBI" id="CHEBI:29033"/>
        <dbReference type="ChEBI" id="CHEBI:29034"/>
        <dbReference type="EC" id="7.1.1.9"/>
    </reaction>
    <physiologicalReaction direction="left-to-right" evidence="2">
        <dbReference type="Rhea" id="RHEA:11437"/>
    </physiologicalReaction>
</comment>
<comment type="subunit">
    <text evidence="1">Component of the cytochrome c oxidase (complex IV, CIV), a multisubunit enzyme composed of 14 subunits. The complex is composed of a catalytic core of 3 subunits MT-CO1, MT-CO2 and MT-CO3, encoded in the mitochondrial DNA, and 11 supernumerary subunits COX4I, COX5A, COX5B, COX6A, COX6B, COX6C, COX7A, COX7B, COX7C, COX8 and NDUFA4, which are encoded in the nuclear genome. The complex exists as a monomer or a dimer and forms supercomplexes (SCs) in the inner mitochondrial membrane with NADH-ubiquinone oxidoreductase (complex I, CI) and ubiquinol-cytochrome c oxidoreductase (cytochrome b-c1 complex, complex III, CIII), resulting in different assemblies (supercomplex SCI(1)III(2)IV(1) and megacomplex MCI(2)III(2)IV(2)).</text>
</comment>
<comment type="subcellular location">
    <subcellularLocation>
        <location evidence="1">Mitochondrion inner membrane</location>
        <topology evidence="1">Multi-pass membrane protein</topology>
    </subcellularLocation>
</comment>
<comment type="similarity">
    <text evidence="3">Belongs to the cytochrome c oxidase subunit 3 family.</text>
</comment>
<organism>
    <name type="scientific">Gazella gazella</name>
    <name type="common">Mountain gazelle</name>
    <dbReference type="NCBI Taxonomy" id="69302"/>
    <lineage>
        <taxon>Eukaryota</taxon>
        <taxon>Metazoa</taxon>
        <taxon>Chordata</taxon>
        <taxon>Craniata</taxon>
        <taxon>Vertebrata</taxon>
        <taxon>Euteleostomi</taxon>
        <taxon>Mammalia</taxon>
        <taxon>Eutheria</taxon>
        <taxon>Laurasiatheria</taxon>
        <taxon>Artiodactyla</taxon>
        <taxon>Ruminantia</taxon>
        <taxon>Pecora</taxon>
        <taxon>Bovidae</taxon>
        <taxon>Antilopinae</taxon>
        <taxon>Gazella</taxon>
    </lineage>
</organism>
<keyword id="KW-0472">Membrane</keyword>
<keyword id="KW-0496">Mitochondrion</keyword>
<keyword id="KW-0999">Mitochondrion inner membrane</keyword>
<keyword id="KW-1278">Translocase</keyword>
<keyword id="KW-0812">Transmembrane</keyword>
<keyword id="KW-1133">Transmembrane helix</keyword>
<evidence type="ECO:0000250" key="1">
    <source>
        <dbReference type="UniProtKB" id="P00415"/>
    </source>
</evidence>
<evidence type="ECO:0000250" key="2">
    <source>
        <dbReference type="UniProtKB" id="P00420"/>
    </source>
</evidence>
<evidence type="ECO:0000305" key="3"/>
<gene>
    <name type="primary">MT-CO3</name>
    <name type="synonym">COIII</name>
    <name type="synonym">COXIII</name>
    <name type="synonym">MTCO3</name>
</gene>
<geneLocation type="mitochondrion"/>
<accession>P68532</accession>
<accession>O47712</accession>
<accession>O48346</accession>
<accession>O48347</accession>
<protein>
    <recommendedName>
        <fullName>Cytochrome c oxidase subunit 3</fullName>
        <ecNumber>7.1.1.9</ecNumber>
    </recommendedName>
    <alternativeName>
        <fullName>Cytochrome c oxidase polypeptide III</fullName>
    </alternativeName>
</protein>
<name>COX3_GAZGA</name>
<dbReference type="EC" id="7.1.1.9"/>
<dbReference type="EMBL" id="AF030485">
    <property type="protein sequence ID" value="AAB93624.1"/>
    <property type="molecule type" value="Genomic_DNA"/>
</dbReference>
<dbReference type="EMBL" id="AF030486">
    <property type="protein sequence ID" value="AAB93625.1"/>
    <property type="molecule type" value="Genomic_DNA"/>
</dbReference>
<dbReference type="EMBL" id="AF030487">
    <property type="protein sequence ID" value="AAB93626.1"/>
    <property type="molecule type" value="Genomic_DNA"/>
</dbReference>
<dbReference type="EMBL" id="AF030488">
    <property type="protein sequence ID" value="AAB93627.1"/>
    <property type="molecule type" value="Genomic_DNA"/>
</dbReference>
<dbReference type="SMR" id="P68532"/>
<dbReference type="CTD" id="4514"/>
<dbReference type="GO" id="GO:0005743">
    <property type="term" value="C:mitochondrial inner membrane"/>
    <property type="evidence" value="ECO:0007669"/>
    <property type="project" value="UniProtKB-SubCell"/>
</dbReference>
<dbReference type="GO" id="GO:0045277">
    <property type="term" value="C:respiratory chain complex IV"/>
    <property type="evidence" value="ECO:0000250"/>
    <property type="project" value="UniProtKB"/>
</dbReference>
<dbReference type="GO" id="GO:0004129">
    <property type="term" value="F:cytochrome-c oxidase activity"/>
    <property type="evidence" value="ECO:0007669"/>
    <property type="project" value="UniProtKB-EC"/>
</dbReference>
<dbReference type="GO" id="GO:0006123">
    <property type="term" value="P:mitochondrial electron transport, cytochrome c to oxygen"/>
    <property type="evidence" value="ECO:0007669"/>
    <property type="project" value="TreeGrafter"/>
</dbReference>
<dbReference type="GO" id="GO:0008535">
    <property type="term" value="P:respiratory chain complex IV assembly"/>
    <property type="evidence" value="ECO:0000250"/>
    <property type="project" value="UniProtKB"/>
</dbReference>
<dbReference type="CDD" id="cd01665">
    <property type="entry name" value="Cyt_c_Oxidase_III"/>
    <property type="match status" value="1"/>
</dbReference>
<dbReference type="FunFam" id="1.10.287.70:FF:000048">
    <property type="entry name" value="Cytochrome c oxidase subunit 3"/>
    <property type="match status" value="1"/>
</dbReference>
<dbReference type="FunFam" id="1.20.120.80:FF:000002">
    <property type="entry name" value="Cytochrome c oxidase subunit 3"/>
    <property type="match status" value="1"/>
</dbReference>
<dbReference type="Gene3D" id="1.10.287.70">
    <property type="match status" value="1"/>
</dbReference>
<dbReference type="Gene3D" id="1.20.120.80">
    <property type="entry name" value="Cytochrome c oxidase, subunit III, four-helix bundle"/>
    <property type="match status" value="1"/>
</dbReference>
<dbReference type="InterPro" id="IPR024791">
    <property type="entry name" value="Cyt_c/ubiquinol_Oxase_su3"/>
</dbReference>
<dbReference type="InterPro" id="IPR033945">
    <property type="entry name" value="Cyt_c_oxase_su3_dom"/>
</dbReference>
<dbReference type="InterPro" id="IPR000298">
    <property type="entry name" value="Cyt_c_oxidase-like_su3"/>
</dbReference>
<dbReference type="InterPro" id="IPR035973">
    <property type="entry name" value="Cyt_c_oxidase_su3-like_sf"/>
</dbReference>
<dbReference type="InterPro" id="IPR013833">
    <property type="entry name" value="Cyt_c_oxidase_su3_a-hlx"/>
</dbReference>
<dbReference type="PANTHER" id="PTHR11403:SF7">
    <property type="entry name" value="CYTOCHROME C OXIDASE SUBUNIT 3"/>
    <property type="match status" value="1"/>
</dbReference>
<dbReference type="PANTHER" id="PTHR11403">
    <property type="entry name" value="CYTOCHROME C OXIDASE SUBUNIT III"/>
    <property type="match status" value="1"/>
</dbReference>
<dbReference type="Pfam" id="PF00510">
    <property type="entry name" value="COX3"/>
    <property type="match status" value="1"/>
</dbReference>
<dbReference type="SUPFAM" id="SSF81452">
    <property type="entry name" value="Cytochrome c oxidase subunit III-like"/>
    <property type="match status" value="1"/>
</dbReference>
<dbReference type="PROSITE" id="PS50253">
    <property type="entry name" value="COX3"/>
    <property type="match status" value="1"/>
</dbReference>
<reference key="1">
    <citation type="journal article" date="1999" name="Mol. Phylogenet. Evol.">
        <title>Phylogenetic relationships in the bovid subfamily Antilopinae based on mitochondrial DNA sequences.</title>
        <authorList>
            <person name="Rebholz W.E.R."/>
            <person name="Harley E.H."/>
        </authorList>
    </citation>
    <scope>NUCLEOTIDE SEQUENCE [GENOMIC DNA]</scope>
    <source>
        <strain>Ssp. cora</strain>
        <strain>Ssp. erlangeri</strain>
        <strain>Ssp. gazella</strain>
    </source>
</reference>